<proteinExistence type="evidence at protein level"/>
<dbReference type="EC" id="2.9.1.2" evidence="1"/>
<dbReference type="EMBL" id="AK033654">
    <property type="protein sequence ID" value="BAC28410.1"/>
    <property type="molecule type" value="mRNA"/>
</dbReference>
<dbReference type="EMBL" id="BC062133">
    <property type="protein sequence ID" value="AAH62133.1"/>
    <property type="molecule type" value="mRNA"/>
</dbReference>
<dbReference type="CCDS" id="CCDS19286.1"/>
<dbReference type="RefSeq" id="NP_766078.1">
    <property type="nucleotide sequence ID" value="NM_172490.4"/>
</dbReference>
<dbReference type="PDB" id="3BC8">
    <property type="method" value="X-ray"/>
    <property type="resolution" value="1.65 A"/>
    <property type="chains" value="A=19-468"/>
</dbReference>
<dbReference type="PDB" id="3BCA">
    <property type="method" value="X-ray"/>
    <property type="resolution" value="2.25 A"/>
    <property type="chains" value="A=19-468"/>
</dbReference>
<dbReference type="PDB" id="3BCB">
    <property type="method" value="X-ray"/>
    <property type="resolution" value="1.85 A"/>
    <property type="chains" value="A=19-468"/>
</dbReference>
<dbReference type="PDBsum" id="3BC8"/>
<dbReference type="PDBsum" id="3BCA"/>
<dbReference type="PDBsum" id="3BCB"/>
<dbReference type="SMR" id="Q6P6M7"/>
<dbReference type="BioGRID" id="229199">
    <property type="interactions" value="5"/>
</dbReference>
<dbReference type="FunCoup" id="Q6P6M7">
    <property type="interactions" value="3203"/>
</dbReference>
<dbReference type="STRING" id="10090.ENSMUSP00000031069"/>
<dbReference type="GlyGen" id="Q6P6M7">
    <property type="glycosylation" value="1 site, 1 O-linked glycan (1 site)"/>
</dbReference>
<dbReference type="iPTMnet" id="Q6P6M7"/>
<dbReference type="PhosphoSitePlus" id="Q6P6M7"/>
<dbReference type="SwissPalm" id="Q6P6M7"/>
<dbReference type="jPOST" id="Q6P6M7"/>
<dbReference type="PaxDb" id="10090-ENSMUSP00000031069"/>
<dbReference type="PeptideAtlas" id="Q6P6M7"/>
<dbReference type="ProteomicsDB" id="261122"/>
<dbReference type="Pumba" id="Q6P6M7"/>
<dbReference type="Antibodypedia" id="10200">
    <property type="antibodies" value="171 antibodies from 28 providers"/>
</dbReference>
<dbReference type="Ensembl" id="ENSMUST00000031069.13">
    <property type="protein sequence ID" value="ENSMUSP00000031069.7"/>
    <property type="gene ID" value="ENSMUSG00000029173.13"/>
</dbReference>
<dbReference type="GeneID" id="211006"/>
<dbReference type="KEGG" id="mmu:211006"/>
<dbReference type="UCSC" id="uc008xko.1">
    <property type="organism name" value="mouse"/>
</dbReference>
<dbReference type="AGR" id="MGI:1098791"/>
<dbReference type="CTD" id="51091"/>
<dbReference type="MGI" id="MGI:1098791">
    <property type="gene designation" value="Sepsecs"/>
</dbReference>
<dbReference type="VEuPathDB" id="HostDB:ENSMUSG00000029173"/>
<dbReference type="eggNOG" id="KOG3843">
    <property type="taxonomic scope" value="Eukaryota"/>
</dbReference>
<dbReference type="GeneTree" id="ENSGT00390000007332"/>
<dbReference type="HOGENOM" id="CLU_022508_0_0_1"/>
<dbReference type="InParanoid" id="Q6P6M7"/>
<dbReference type="OMA" id="MSHANDY"/>
<dbReference type="OrthoDB" id="10263545at2759"/>
<dbReference type="PhylomeDB" id="Q6P6M7"/>
<dbReference type="TreeFam" id="TF314381"/>
<dbReference type="BioCyc" id="MetaCyc:MONOMER-14964"/>
<dbReference type="UniPathway" id="UPA00906">
    <property type="reaction ID" value="UER00898"/>
</dbReference>
<dbReference type="BioGRID-ORCS" id="211006">
    <property type="hits" value="27 hits in 78 CRISPR screens"/>
</dbReference>
<dbReference type="EvolutionaryTrace" id="Q6P6M7"/>
<dbReference type="PRO" id="PR:Q6P6M7"/>
<dbReference type="Proteomes" id="UP000000589">
    <property type="component" value="Chromosome 5"/>
</dbReference>
<dbReference type="RNAct" id="Q6P6M7">
    <property type="molecule type" value="protein"/>
</dbReference>
<dbReference type="Bgee" id="ENSMUSG00000029173">
    <property type="expression patterns" value="Expressed in chest muscle and 220 other cell types or tissues"/>
</dbReference>
<dbReference type="ExpressionAtlas" id="Q6P6M7">
    <property type="expression patterns" value="baseline and differential"/>
</dbReference>
<dbReference type="GO" id="GO:0005737">
    <property type="term" value="C:cytoplasm"/>
    <property type="evidence" value="ECO:0000314"/>
    <property type="project" value="HGNC-UCL"/>
</dbReference>
<dbReference type="GO" id="GO:0005634">
    <property type="term" value="C:nucleus"/>
    <property type="evidence" value="ECO:0000314"/>
    <property type="project" value="HGNC-UCL"/>
</dbReference>
<dbReference type="GO" id="GO:0098621">
    <property type="term" value="F:O-phosphoseryl-tRNA(Sec) selenium transferase activity"/>
    <property type="evidence" value="ECO:0007669"/>
    <property type="project" value="UniProtKB-EC"/>
</dbReference>
<dbReference type="GO" id="GO:0000049">
    <property type="term" value="F:tRNA binding"/>
    <property type="evidence" value="ECO:0000314"/>
    <property type="project" value="HGNC-UCL"/>
</dbReference>
<dbReference type="GO" id="GO:0001717">
    <property type="term" value="P:conversion of seryl-tRNAsec to selenocys-tRNAsec"/>
    <property type="evidence" value="ECO:0007669"/>
    <property type="project" value="InterPro"/>
</dbReference>
<dbReference type="GO" id="GO:0001514">
    <property type="term" value="P:selenocysteine incorporation"/>
    <property type="evidence" value="ECO:0000314"/>
    <property type="project" value="HGNC-UCL"/>
</dbReference>
<dbReference type="FunFam" id="3.40.640.10:FF:000070">
    <property type="entry name" value="O-phosphoseryl-tRNA(Sec) selenium transferase"/>
    <property type="match status" value="1"/>
</dbReference>
<dbReference type="Gene3D" id="3.40.640.10">
    <property type="entry name" value="Type I PLP-dependent aspartate aminotransferase-like (Major domain)"/>
    <property type="match status" value="1"/>
</dbReference>
<dbReference type="InterPro" id="IPR015424">
    <property type="entry name" value="PyrdxlP-dep_Trfase"/>
</dbReference>
<dbReference type="InterPro" id="IPR015421">
    <property type="entry name" value="PyrdxlP-dep_Trfase_major"/>
</dbReference>
<dbReference type="InterPro" id="IPR019872">
    <property type="entry name" value="Sec-tRNA_Se_transferase"/>
</dbReference>
<dbReference type="InterPro" id="IPR008829">
    <property type="entry name" value="SepSecS/SepCysS"/>
</dbReference>
<dbReference type="NCBIfam" id="TIGR03531">
    <property type="entry name" value="selenium_SpcS"/>
    <property type="match status" value="1"/>
</dbReference>
<dbReference type="PANTHER" id="PTHR12944:SF2">
    <property type="entry name" value="O-PHOSPHOSERYL-TRNA(SEC) SELENIUM TRANSFERASE"/>
    <property type="match status" value="1"/>
</dbReference>
<dbReference type="PANTHER" id="PTHR12944">
    <property type="entry name" value="SOLUBLE LIVER ANTIGEN/LIVER PANCREAS ANTIGEN"/>
    <property type="match status" value="1"/>
</dbReference>
<dbReference type="Pfam" id="PF05889">
    <property type="entry name" value="SepSecS"/>
    <property type="match status" value="1"/>
</dbReference>
<dbReference type="PIRSF" id="PIRSF017689">
    <property type="entry name" value="SepSecS"/>
    <property type="match status" value="1"/>
</dbReference>
<dbReference type="SUPFAM" id="SSF53383">
    <property type="entry name" value="PLP-dependent transferases"/>
    <property type="match status" value="1"/>
</dbReference>
<reference key="1">
    <citation type="journal article" date="2005" name="Science">
        <title>The transcriptional landscape of the mammalian genome.</title>
        <authorList>
            <person name="Carninci P."/>
            <person name="Kasukawa T."/>
            <person name="Katayama S."/>
            <person name="Gough J."/>
            <person name="Frith M.C."/>
            <person name="Maeda N."/>
            <person name="Oyama R."/>
            <person name="Ravasi T."/>
            <person name="Lenhard B."/>
            <person name="Wells C."/>
            <person name="Kodzius R."/>
            <person name="Shimokawa K."/>
            <person name="Bajic V.B."/>
            <person name="Brenner S.E."/>
            <person name="Batalov S."/>
            <person name="Forrest A.R."/>
            <person name="Zavolan M."/>
            <person name="Davis M.J."/>
            <person name="Wilming L.G."/>
            <person name="Aidinis V."/>
            <person name="Allen J.E."/>
            <person name="Ambesi-Impiombato A."/>
            <person name="Apweiler R."/>
            <person name="Aturaliya R.N."/>
            <person name="Bailey T.L."/>
            <person name="Bansal M."/>
            <person name="Baxter L."/>
            <person name="Beisel K.W."/>
            <person name="Bersano T."/>
            <person name="Bono H."/>
            <person name="Chalk A.M."/>
            <person name="Chiu K.P."/>
            <person name="Choudhary V."/>
            <person name="Christoffels A."/>
            <person name="Clutterbuck D.R."/>
            <person name="Crowe M.L."/>
            <person name="Dalla E."/>
            <person name="Dalrymple B.P."/>
            <person name="de Bono B."/>
            <person name="Della Gatta G."/>
            <person name="di Bernardo D."/>
            <person name="Down T."/>
            <person name="Engstrom P."/>
            <person name="Fagiolini M."/>
            <person name="Faulkner G."/>
            <person name="Fletcher C.F."/>
            <person name="Fukushima T."/>
            <person name="Furuno M."/>
            <person name="Futaki S."/>
            <person name="Gariboldi M."/>
            <person name="Georgii-Hemming P."/>
            <person name="Gingeras T.R."/>
            <person name="Gojobori T."/>
            <person name="Green R.E."/>
            <person name="Gustincich S."/>
            <person name="Harbers M."/>
            <person name="Hayashi Y."/>
            <person name="Hensch T.K."/>
            <person name="Hirokawa N."/>
            <person name="Hill D."/>
            <person name="Huminiecki L."/>
            <person name="Iacono M."/>
            <person name="Ikeo K."/>
            <person name="Iwama A."/>
            <person name="Ishikawa T."/>
            <person name="Jakt M."/>
            <person name="Kanapin A."/>
            <person name="Katoh M."/>
            <person name="Kawasawa Y."/>
            <person name="Kelso J."/>
            <person name="Kitamura H."/>
            <person name="Kitano H."/>
            <person name="Kollias G."/>
            <person name="Krishnan S.P."/>
            <person name="Kruger A."/>
            <person name="Kummerfeld S.K."/>
            <person name="Kurochkin I.V."/>
            <person name="Lareau L.F."/>
            <person name="Lazarevic D."/>
            <person name="Lipovich L."/>
            <person name="Liu J."/>
            <person name="Liuni S."/>
            <person name="McWilliam S."/>
            <person name="Madan Babu M."/>
            <person name="Madera M."/>
            <person name="Marchionni L."/>
            <person name="Matsuda H."/>
            <person name="Matsuzawa S."/>
            <person name="Miki H."/>
            <person name="Mignone F."/>
            <person name="Miyake S."/>
            <person name="Morris K."/>
            <person name="Mottagui-Tabar S."/>
            <person name="Mulder N."/>
            <person name="Nakano N."/>
            <person name="Nakauchi H."/>
            <person name="Ng P."/>
            <person name="Nilsson R."/>
            <person name="Nishiguchi S."/>
            <person name="Nishikawa S."/>
            <person name="Nori F."/>
            <person name="Ohara O."/>
            <person name="Okazaki Y."/>
            <person name="Orlando V."/>
            <person name="Pang K.C."/>
            <person name="Pavan W.J."/>
            <person name="Pavesi G."/>
            <person name="Pesole G."/>
            <person name="Petrovsky N."/>
            <person name="Piazza S."/>
            <person name="Reed J."/>
            <person name="Reid J.F."/>
            <person name="Ring B.Z."/>
            <person name="Ringwald M."/>
            <person name="Rost B."/>
            <person name="Ruan Y."/>
            <person name="Salzberg S.L."/>
            <person name="Sandelin A."/>
            <person name="Schneider C."/>
            <person name="Schoenbach C."/>
            <person name="Sekiguchi K."/>
            <person name="Semple C.A."/>
            <person name="Seno S."/>
            <person name="Sessa L."/>
            <person name="Sheng Y."/>
            <person name="Shibata Y."/>
            <person name="Shimada H."/>
            <person name="Shimada K."/>
            <person name="Silva D."/>
            <person name="Sinclair B."/>
            <person name="Sperling S."/>
            <person name="Stupka E."/>
            <person name="Sugiura K."/>
            <person name="Sultana R."/>
            <person name="Takenaka Y."/>
            <person name="Taki K."/>
            <person name="Tammoja K."/>
            <person name="Tan S.L."/>
            <person name="Tang S."/>
            <person name="Taylor M.S."/>
            <person name="Tegner J."/>
            <person name="Teichmann S.A."/>
            <person name="Ueda H.R."/>
            <person name="van Nimwegen E."/>
            <person name="Verardo R."/>
            <person name="Wei C.L."/>
            <person name="Yagi K."/>
            <person name="Yamanishi H."/>
            <person name="Zabarovsky E."/>
            <person name="Zhu S."/>
            <person name="Zimmer A."/>
            <person name="Hide W."/>
            <person name="Bult C."/>
            <person name="Grimmond S.M."/>
            <person name="Teasdale R.D."/>
            <person name="Liu E.T."/>
            <person name="Brusic V."/>
            <person name="Quackenbush J."/>
            <person name="Wahlestedt C."/>
            <person name="Mattick J.S."/>
            <person name="Hume D.A."/>
            <person name="Kai C."/>
            <person name="Sasaki D."/>
            <person name="Tomaru Y."/>
            <person name="Fukuda S."/>
            <person name="Kanamori-Katayama M."/>
            <person name="Suzuki M."/>
            <person name="Aoki J."/>
            <person name="Arakawa T."/>
            <person name="Iida J."/>
            <person name="Imamura K."/>
            <person name="Itoh M."/>
            <person name="Kato T."/>
            <person name="Kawaji H."/>
            <person name="Kawagashira N."/>
            <person name="Kawashima T."/>
            <person name="Kojima M."/>
            <person name="Kondo S."/>
            <person name="Konno H."/>
            <person name="Nakano K."/>
            <person name="Ninomiya N."/>
            <person name="Nishio T."/>
            <person name="Okada M."/>
            <person name="Plessy C."/>
            <person name="Shibata K."/>
            <person name="Shiraki T."/>
            <person name="Suzuki S."/>
            <person name="Tagami M."/>
            <person name="Waki K."/>
            <person name="Watahiki A."/>
            <person name="Okamura-Oho Y."/>
            <person name="Suzuki H."/>
            <person name="Kawai J."/>
            <person name="Hayashizaki Y."/>
        </authorList>
    </citation>
    <scope>NUCLEOTIDE SEQUENCE [LARGE SCALE MRNA]</scope>
    <source>
        <strain>C57BL/6J</strain>
        <tissue>Cecum</tissue>
    </source>
</reference>
<reference key="2">
    <citation type="journal article" date="2004" name="Genome Res.">
        <title>The status, quality, and expansion of the NIH full-length cDNA project: the Mammalian Gene Collection (MGC).</title>
        <authorList>
            <consortium name="The MGC Project Team"/>
        </authorList>
    </citation>
    <scope>NUCLEOTIDE SEQUENCE [LARGE SCALE MRNA]</scope>
    <source>
        <tissue>Limb</tissue>
    </source>
</reference>
<reference key="3">
    <citation type="journal article" date="2010" name="Cell">
        <title>A tissue-specific atlas of mouse protein phosphorylation and expression.</title>
        <authorList>
            <person name="Huttlin E.L."/>
            <person name="Jedrychowski M.P."/>
            <person name="Elias J.E."/>
            <person name="Goswami T."/>
            <person name="Rad R."/>
            <person name="Beausoleil S.A."/>
            <person name="Villen J."/>
            <person name="Haas W."/>
            <person name="Sowa M.E."/>
            <person name="Gygi S.P."/>
        </authorList>
    </citation>
    <scope>IDENTIFICATION BY MASS SPECTROMETRY [LARGE SCALE ANALYSIS]</scope>
    <source>
        <tissue>Pancreas</tissue>
        <tissue>Testis</tissue>
    </source>
</reference>
<reference key="4">
    <citation type="journal article" date="2008" name="J. Biol. Chem.">
        <title>Structure and catalytic mechanism of eukaryotic selenocysteine synthase.</title>
        <authorList>
            <person name="Ganichkin O.M."/>
            <person name="Xu X.M."/>
            <person name="Carlson B.A."/>
            <person name="Mix H."/>
            <person name="Hatfield D.L."/>
            <person name="Gladyshev V.N."/>
            <person name="Wahl M.C."/>
        </authorList>
    </citation>
    <scope>X-RAY CRYSTALLOGRAPHY (1.65 ANGSTROMS) OF 19-468 IN COMPLEX WITH PYRIDOXAL PHOSPHATE</scope>
    <scope>SUBUNIT</scope>
    <scope>SUBSTRATE-BINDING SITES</scope>
    <scope>COFACTOR</scope>
    <scope>MUTAGENESIS OF GLN-105 AND ARG-313</scope>
    <scope>REGION</scope>
</reference>
<protein>
    <recommendedName>
        <fullName>O-phosphoseryl-tRNA(Sec) selenium transferase</fullName>
        <ecNumber evidence="1">2.9.1.2</ecNumber>
    </recommendedName>
    <alternativeName>
        <fullName>Selenocysteine synthase</fullName>
        <shortName>Sec synthase</shortName>
    </alternativeName>
    <alternativeName>
        <fullName>Selenocysteinyl-tRNA(Sec) synthase</fullName>
    </alternativeName>
    <alternativeName>
        <fullName>Sep-tRNA:Sec-tRNA synthase</fullName>
        <shortName>SepSecS</shortName>
    </alternativeName>
    <alternativeName>
        <fullName>UGA suppressor tRNA-associated protein</fullName>
    </alternativeName>
</protein>
<evidence type="ECO:0000250" key="1">
    <source>
        <dbReference type="UniProtKB" id="Q9HD40"/>
    </source>
</evidence>
<evidence type="ECO:0000269" key="2">
    <source>
    </source>
</evidence>
<evidence type="ECO:0000305" key="3"/>
<evidence type="ECO:0007829" key="4">
    <source>
        <dbReference type="PDB" id="3BC8"/>
    </source>
</evidence>
<evidence type="ECO:0007829" key="5">
    <source>
        <dbReference type="PDB" id="3BCB"/>
    </source>
</evidence>
<comment type="function">
    <text evidence="1">Converts O-phosphoseryl-tRNA(Sec) to selenocysteinyl-tRNA(Sec) required for selenoprotein biosynthesis.</text>
</comment>
<comment type="catalytic activity">
    <reaction evidence="1">
        <text>O-phospho-L-seryl-tRNA(Sec) + selenophosphate + H2O = L-selenocysteinyl-tRNA(Sec) + 2 phosphate</text>
        <dbReference type="Rhea" id="RHEA:25041"/>
        <dbReference type="Rhea" id="RHEA-COMP:9743"/>
        <dbReference type="Rhea" id="RHEA-COMP:9947"/>
        <dbReference type="ChEBI" id="CHEBI:15377"/>
        <dbReference type="ChEBI" id="CHEBI:16144"/>
        <dbReference type="ChEBI" id="CHEBI:43474"/>
        <dbReference type="ChEBI" id="CHEBI:78551"/>
        <dbReference type="ChEBI" id="CHEBI:78573"/>
        <dbReference type="EC" id="2.9.1.2"/>
    </reaction>
</comment>
<comment type="cofactor">
    <cofactor evidence="2">
        <name>pyridoxal 5'-phosphate</name>
        <dbReference type="ChEBI" id="CHEBI:597326"/>
    </cofactor>
</comment>
<comment type="pathway">
    <text evidence="1">Aminoacyl-tRNA biosynthesis; selenocysteinyl-tRNA(Sec) biosynthesis; selenocysteinyl-tRNA(Sec) from L-seryl-tRNA(Sec) (archaeal/eukaryal route): step 2/2.</text>
</comment>
<comment type="subunit">
    <text evidence="1 2">Homotetramer formed by a catalytic dimer and a non-catalytic dimer serving as a binding platform that orients tRNASec for catalysis. Each tetramer binds the CCA ends of two tRNAs which point to the active sites of the catalytic dimer (By similarity).</text>
</comment>
<comment type="subcellular location">
    <subcellularLocation>
        <location evidence="1">Cytoplasm</location>
    </subcellularLocation>
</comment>
<comment type="similarity">
    <text evidence="3">Belongs to the SepSecS family.</text>
</comment>
<organism>
    <name type="scientific">Mus musculus</name>
    <name type="common">Mouse</name>
    <dbReference type="NCBI Taxonomy" id="10090"/>
    <lineage>
        <taxon>Eukaryota</taxon>
        <taxon>Metazoa</taxon>
        <taxon>Chordata</taxon>
        <taxon>Craniata</taxon>
        <taxon>Vertebrata</taxon>
        <taxon>Euteleostomi</taxon>
        <taxon>Mammalia</taxon>
        <taxon>Eutheria</taxon>
        <taxon>Euarchontoglires</taxon>
        <taxon>Glires</taxon>
        <taxon>Rodentia</taxon>
        <taxon>Myomorpha</taxon>
        <taxon>Muroidea</taxon>
        <taxon>Muridae</taxon>
        <taxon>Murinae</taxon>
        <taxon>Mus</taxon>
        <taxon>Mus</taxon>
    </lineage>
</organism>
<keyword id="KW-0002">3D-structure</keyword>
<keyword id="KW-0963">Cytoplasm</keyword>
<keyword id="KW-0597">Phosphoprotein</keyword>
<keyword id="KW-0648">Protein biosynthesis</keyword>
<keyword id="KW-0663">Pyridoxal phosphate</keyword>
<keyword id="KW-1185">Reference proteome</keyword>
<keyword id="KW-0694">RNA-binding</keyword>
<keyword id="KW-0711">Selenium</keyword>
<keyword id="KW-0808">Transferase</keyword>
<keyword id="KW-0820">tRNA-binding</keyword>
<gene>
    <name type="primary">Sepsecs</name>
    <name type="synonym">D5Ertd135e</name>
</gene>
<feature type="chain" id="PRO_0000219876" description="O-phosphoseryl-tRNA(Sec) selenium transferase">
    <location>
        <begin position="1"/>
        <end position="504"/>
    </location>
</feature>
<feature type="region of interest" description="Tetramerization" evidence="2">
    <location>
        <begin position="1"/>
        <end position="44"/>
    </location>
</feature>
<feature type="region of interest" description="Phosphate loop (P-loop)" evidence="2">
    <location>
        <begin position="96"/>
        <end position="106"/>
    </location>
</feature>
<feature type="binding site" evidence="2">
    <location>
        <position position="75"/>
    </location>
    <ligand>
        <name>pyridoxal 5'-phosphate</name>
        <dbReference type="ChEBI" id="CHEBI:597326"/>
    </ligand>
</feature>
<feature type="binding site" evidence="2">
    <location>
        <position position="97"/>
    </location>
    <ligand>
        <name>substrate</name>
    </ligand>
</feature>
<feature type="binding site" evidence="2">
    <location>
        <position position="98"/>
    </location>
    <ligand>
        <name>substrate</name>
    </ligand>
</feature>
<feature type="binding site" evidence="2">
    <location>
        <position position="105"/>
    </location>
    <ligand>
        <name>substrate</name>
    </ligand>
</feature>
<feature type="binding site" evidence="2">
    <location>
        <position position="271"/>
    </location>
    <ligand>
        <name>tRNA</name>
        <dbReference type="ChEBI" id="CHEBI:17843"/>
    </ligand>
    <ligandPart>
        <name>tRNA variable arm</name>
    </ligandPart>
</feature>
<feature type="binding site" evidence="2">
    <location>
        <position position="313"/>
    </location>
    <ligand>
        <name>substrate</name>
    </ligand>
</feature>
<feature type="binding site" evidence="2">
    <location>
        <position position="398"/>
    </location>
    <ligand>
        <name>tRNA</name>
        <dbReference type="ChEBI" id="CHEBI:17843"/>
    </ligand>
    <ligandPart>
        <name>tRNA discriminator base</name>
    </ligandPart>
</feature>
<feature type="binding site" evidence="2">
    <location>
        <position position="463"/>
    </location>
    <ligand>
        <name>tRNA</name>
        <dbReference type="ChEBI" id="CHEBI:17843"/>
    </ligand>
    <ligandPart>
        <name>tRNA acceptor arm</name>
    </ligandPart>
</feature>
<feature type="site" description="May act as a substrate filter by repelling compounds with a negatively charged alpha-carboxylate" evidence="2">
    <location>
        <position position="74"/>
    </location>
</feature>
<feature type="modified residue" description="Phosphoserine" evidence="1">
    <location>
        <position position="14"/>
    </location>
</feature>
<feature type="modified residue" description="N6-(pyridoxal phosphate)lysine" evidence="2">
    <location>
        <position position="284"/>
    </location>
</feature>
<feature type="mutagenesis site" description="50% of wild-type activity." evidence="2">
    <original>Q</original>
    <variation>E</variation>
    <location>
        <position position="105"/>
    </location>
</feature>
<feature type="mutagenesis site" description="Virtually inactive." evidence="2">
    <original>R</original>
    <variation>E</variation>
    <location>
        <position position="313"/>
    </location>
</feature>
<feature type="mutagenesis site" description="30% of wild-type activity." evidence="2">
    <original>R</original>
    <variation>S</variation>
    <location>
        <position position="313"/>
    </location>
</feature>
<feature type="sequence conflict" description="In Ref. 2; AAH62133." evidence="3" ref="2">
    <original>E</original>
    <variation>D</variation>
    <location>
        <position position="300"/>
    </location>
</feature>
<feature type="helix" evidence="4">
    <location>
        <begin position="24"/>
        <end position="38"/>
    </location>
</feature>
<feature type="helix" evidence="4">
    <location>
        <begin position="48"/>
        <end position="60"/>
    </location>
</feature>
<feature type="helix" evidence="4">
    <location>
        <begin position="63"/>
        <end position="65"/>
    </location>
</feature>
<feature type="helix" evidence="4">
    <location>
        <begin position="82"/>
        <end position="87"/>
    </location>
</feature>
<feature type="turn" evidence="4">
    <location>
        <begin position="88"/>
        <end position="90"/>
    </location>
</feature>
<feature type="strand" evidence="5">
    <location>
        <begin position="95"/>
        <end position="97"/>
    </location>
</feature>
<feature type="helix" evidence="4">
    <location>
        <begin position="109"/>
        <end position="129"/>
    </location>
</feature>
<feature type="strand" evidence="4">
    <location>
        <begin position="136"/>
        <end position="142"/>
    </location>
</feature>
<feature type="helix" evidence="4">
    <location>
        <begin position="144"/>
        <end position="158"/>
    </location>
</feature>
<feature type="strand" evidence="4">
    <location>
        <begin position="164"/>
        <end position="168"/>
    </location>
</feature>
<feature type="helix" evidence="4">
    <location>
        <begin position="173"/>
        <end position="181"/>
    </location>
</feature>
<feature type="strand" evidence="4">
    <location>
        <begin position="185"/>
        <end position="189"/>
    </location>
</feature>
<feature type="strand" evidence="4">
    <location>
        <begin position="192"/>
        <end position="194"/>
    </location>
</feature>
<feature type="strand" evidence="4">
    <location>
        <begin position="197"/>
        <end position="199"/>
    </location>
</feature>
<feature type="helix" evidence="4">
    <location>
        <begin position="202"/>
        <end position="212"/>
    </location>
</feature>
<feature type="helix" evidence="4">
    <location>
        <begin position="214"/>
        <end position="216"/>
    </location>
</feature>
<feature type="strand" evidence="4">
    <location>
        <begin position="217"/>
        <end position="225"/>
    </location>
</feature>
<feature type="helix" evidence="4">
    <location>
        <begin position="235"/>
        <end position="245"/>
    </location>
</feature>
<feature type="strand" evidence="4">
    <location>
        <begin position="249"/>
        <end position="252"/>
    </location>
</feature>
<feature type="turn" evidence="4">
    <location>
        <begin position="254"/>
        <end position="258"/>
    </location>
</feature>
<feature type="helix" evidence="4">
    <location>
        <begin position="260"/>
        <end position="272"/>
    </location>
</feature>
<feature type="strand" evidence="4">
    <location>
        <begin position="277"/>
        <end position="281"/>
    </location>
</feature>
<feature type="strand" evidence="4">
    <location>
        <begin position="293"/>
        <end position="298"/>
    </location>
</feature>
<feature type="helix" evidence="4">
    <location>
        <begin position="300"/>
        <end position="309"/>
    </location>
</feature>
<feature type="helix" evidence="4">
    <location>
        <begin position="317"/>
        <end position="358"/>
    </location>
</feature>
<feature type="strand" evidence="4">
    <location>
        <begin position="370"/>
        <end position="376"/>
    </location>
</feature>
<feature type="turn" evidence="4">
    <location>
        <begin position="378"/>
        <end position="380"/>
    </location>
</feature>
<feature type="strand" evidence="4">
    <location>
        <begin position="381"/>
        <end position="385"/>
    </location>
</feature>
<feature type="helix" evidence="4">
    <location>
        <begin position="387"/>
        <end position="397"/>
    </location>
</feature>
<feature type="strand" evidence="4">
    <location>
        <begin position="404"/>
        <end position="406"/>
    </location>
</feature>
<feature type="strand" evidence="4">
    <location>
        <begin position="411"/>
        <end position="414"/>
    </location>
</feature>
<feature type="strand" evidence="4">
    <location>
        <begin position="417"/>
        <end position="420"/>
    </location>
</feature>
<feature type="turn" evidence="4">
    <location>
        <begin position="421"/>
        <end position="425"/>
    </location>
</feature>
<feature type="strand" evidence="4">
    <location>
        <begin position="433"/>
        <end position="437"/>
    </location>
</feature>
<feature type="helix" evidence="4">
    <location>
        <begin position="444"/>
        <end position="465"/>
    </location>
</feature>
<name>SPCS_MOUSE</name>
<accession>Q6P6M7</accession>
<accession>Q8BZS6</accession>
<sequence length="504" mass="55326">MNPESFAAGERRVSPAYVRQGCEARRAHEHLIRLLLEQGKCPEDGWDESTLELFLHELAVMDSNNFLGNCGVGEREGRVASALVARRHYRFIHGIGRSGDISAVQPKAAGSSLLNKITNSLVLNVIKLAGVHSVASCFVVPMATGMSLTLCFLTLRHKRPKAKYIIWPRIDQKSCFKSMVTAGFEPVVIENVLEGDELRTDLKAVEAKIQELGPEHILCLHSTTACFAPRVPDRLEELAVICANYDIPHVVNNAYGLQSSKCMHLIQQGARVGRIDAFVQSLDKNFMVPVGGAIIAGFNEPFIQDISKMYPGRASASPSLDVLITLLSLGCSGYRKLLKERKEMFVYLSTQLKKLAEAHNERLLQTPHNPISLAMTLKTIDGHHDKAVTQLGSMLFTRQVSGARAVPLGNVQTVSGHTFRGFMSHADNYPCAYLNAAAAIGMKMQDVDLFIKRLDKCLNIVRKEQTRASVVSGADRNKAEDADIEEMALKLDDVLGDVGQGPAL</sequence>